<sequence length="25" mass="2920">FFGWLIRGAIHAGKAIHGLIHRRRH</sequence>
<evidence type="ECO:0000269" key="1">
    <source>
    </source>
</evidence>
<evidence type="ECO:0000303" key="2">
    <source>
    </source>
</evidence>
<evidence type="ECO:0000305" key="3"/>
<reference evidence="3" key="1">
    <citation type="journal article" date="2003" name="Eur. J. Biochem.">
        <title>Purification and characterization of three isoforms of chrysophsin, a novel antimicrobial peptide in the gills of the red sea bream, Chrysophrys major.</title>
        <authorList>
            <person name="Iijima N."/>
            <person name="Tanimoto N."/>
            <person name="Emoto Y."/>
            <person name="Morita Y."/>
            <person name="Uematsu K."/>
            <person name="Murakami T."/>
            <person name="Nakai T."/>
        </authorList>
    </citation>
    <scope>PROTEIN SEQUENCE</scope>
    <scope>FUNCTION</scope>
    <scope>AMIDATION AT HIS-25</scope>
    <scope>MASS SPECTROMETRY</scope>
    <scope>CIRCULAR DICHROISM ANALYSIS</scope>
    <scope>SYNTHESIS</scope>
    <source>
        <tissue>Gill</tissue>
    </source>
</reference>
<protein>
    <recommendedName>
        <fullName>Chrysophsin-2</fullName>
    </recommendedName>
</protein>
<name>CHY2_PAGMA</name>
<organism evidence="3">
    <name type="scientific">Pagrus major</name>
    <name type="common">Red sea bream</name>
    <name type="synonym">Chrysophrys major</name>
    <dbReference type="NCBI Taxonomy" id="143350"/>
    <lineage>
        <taxon>Eukaryota</taxon>
        <taxon>Metazoa</taxon>
        <taxon>Chordata</taxon>
        <taxon>Craniata</taxon>
        <taxon>Vertebrata</taxon>
        <taxon>Euteleostomi</taxon>
        <taxon>Actinopterygii</taxon>
        <taxon>Neopterygii</taxon>
        <taxon>Teleostei</taxon>
        <taxon>Neoteleostei</taxon>
        <taxon>Acanthomorphata</taxon>
        <taxon>Eupercaria</taxon>
        <taxon>Spariformes</taxon>
        <taxon>Sparidae</taxon>
        <taxon>Pagrus</taxon>
    </lineage>
</organism>
<accession>P83546</accession>
<proteinExistence type="evidence at protein level"/>
<comment type="function">
    <text evidence="1 2">Has antibacterial activity against Gram-positive bacteria B.subtilis ATCC 6633, L.garvieae ATCC 49156 and S.iniae F-8502, and Gram-negative bacteria E.coli WT-2, V.anguillarum ATCC 19264, V.penaeicida KHA, V.harveyi ATCC 14126, V.vulnificus ATCC 33148 and A.salmonicida NCMB 1102. Has hemolytic activity against human red blood cells. Seems to disrupt the membranes by adopting an alpha helical conformation. May play a significant role in innate host defense.</text>
</comment>
<comment type="subcellular location">
    <subcellularLocation>
        <location>Secreted</location>
    </subcellularLocation>
</comment>
<comment type="tissue specificity">
    <text>Gill.</text>
</comment>
<comment type="mass spectrometry" mass="2919.3" error="0.4" method="Electrospray" evidence="1"/>
<comment type="similarity">
    <text evidence="3">Belongs to the pleurocidin family.</text>
</comment>
<dbReference type="TCDB" id="1.C.88.1.2">
    <property type="family name" value="the chrysophsin (chrysophsin) family"/>
</dbReference>
<dbReference type="GO" id="GO:0005576">
    <property type="term" value="C:extracellular region"/>
    <property type="evidence" value="ECO:0007669"/>
    <property type="project" value="UniProtKB-SubCell"/>
</dbReference>
<dbReference type="GO" id="GO:0006952">
    <property type="term" value="P:defense response"/>
    <property type="evidence" value="ECO:0000314"/>
    <property type="project" value="UniProtKB"/>
</dbReference>
<dbReference type="GO" id="GO:0050829">
    <property type="term" value="P:defense response to Gram-negative bacterium"/>
    <property type="evidence" value="ECO:0000314"/>
    <property type="project" value="UniProtKB"/>
</dbReference>
<dbReference type="GO" id="GO:0050830">
    <property type="term" value="P:defense response to Gram-positive bacterium"/>
    <property type="evidence" value="ECO:0000314"/>
    <property type="project" value="UniProtKB"/>
</dbReference>
<dbReference type="GO" id="GO:0044179">
    <property type="term" value="P:hemolysis in another organism"/>
    <property type="evidence" value="ECO:0000314"/>
    <property type="project" value="UniProtKB"/>
</dbReference>
<dbReference type="InterPro" id="IPR012515">
    <property type="entry name" value="Antimicrobial12"/>
</dbReference>
<dbReference type="Pfam" id="PF08107">
    <property type="entry name" value="Antimicrobial12"/>
    <property type="match status" value="1"/>
</dbReference>
<keyword id="KW-0027">Amidation</keyword>
<keyword id="KW-0044">Antibiotic</keyword>
<keyword id="KW-0929">Antimicrobial</keyword>
<keyword id="KW-0204">Cytolysis</keyword>
<keyword id="KW-0903">Direct protein sequencing</keyword>
<keyword id="KW-0354">Hemolysis</keyword>
<keyword id="KW-0964">Secreted</keyword>
<feature type="peptide" id="PRO_0000043415" description="Chrysophsin-2">
    <location>
        <begin position="1"/>
        <end position="25"/>
    </location>
</feature>
<feature type="modified residue" description="Histidine amide" evidence="1">
    <location>
        <position position="25"/>
    </location>
</feature>